<comment type="function">
    <text evidence="1">Guanine nucleotide-binding proteins (G proteins) are involved as a modulator or transducer in various transmembrane signaling systems. The beta and gamma chains are required for the GTPase activity, for replacement of GDP by GTP, and for G protein-effector interaction. In the early embryo, controls the magnitude of the forces acting on centrosomes but is not required for generating asymmetric forces.</text>
</comment>
<comment type="subunit">
    <text evidence="1 2">G proteins are composed of 3 units, alpha, beta and gamma. Interacts with G protein gamma subunits gpc-1 and gpc-2 and with egl-10 and eat-16. Interacts with goa-1 (in GDP-bound form).</text>
</comment>
<comment type="similarity">
    <text evidence="3">Belongs to the WD repeat G protein beta family.</text>
</comment>
<organism>
    <name type="scientific">Caenorhabditis briggsae</name>
    <dbReference type="NCBI Taxonomy" id="6238"/>
    <lineage>
        <taxon>Eukaryota</taxon>
        <taxon>Metazoa</taxon>
        <taxon>Ecdysozoa</taxon>
        <taxon>Nematoda</taxon>
        <taxon>Chromadorea</taxon>
        <taxon>Rhabditida</taxon>
        <taxon>Rhabditina</taxon>
        <taxon>Rhabditomorpha</taxon>
        <taxon>Rhabditoidea</taxon>
        <taxon>Rhabditidae</taxon>
        <taxon>Peloderinae</taxon>
        <taxon>Caenorhabditis</taxon>
    </lineage>
</organism>
<sequence length="340" mass="37406">MSELDQLRQEAEQLKSQIREARKSANDTTLATVASNLEPIGRIQMRTRRTLRGHLAKIYAMHWASDSRNLVSASQDGKLIVWDSYTTNKVHAIPLRSSWVMTCAYAPSGSFVACGGLDNICSIYSLKTREGNVRVSRELPGHTGYLSCCRFLDDNQIVTSSGDMTCALWDIETGQQCTAFTGHTGDVMSLSLSPDFRTFISGACDASAKLWDIRDGMCKQTFPGHESDINAVAFFPSGNAFATGSDDATCRLFDIRADQELAMYSHDNIICGITSVAFSKSGRLLFAGYDDFNCNVWDSMRQERAGVLAGHDNRVSCLGVTEDGMAVCTGSWDSFLKIWN</sequence>
<gene>
    <name type="primary">gpb-1</name>
    <name type="ORF">CBG03131</name>
</gene>
<protein>
    <recommendedName>
        <fullName>Guanine nucleotide-binding protein subunit beta-1</fullName>
    </recommendedName>
</protein>
<reference key="1">
    <citation type="journal article" date="2005" name="Mol. Genet. Genomics">
        <title>Functional constraint and divergence in the G protein family in Caenorhabditis elegans and Caenorhabditis briggsae.</title>
        <authorList>
            <person name="Jovelin R."/>
            <person name="Phillips P.C."/>
        </authorList>
    </citation>
    <scope>NUCLEOTIDE SEQUENCE [GENOMIC DNA]</scope>
    <source>
        <strain>AF16</strain>
    </source>
</reference>
<reference key="2">
    <citation type="journal article" date="2003" name="PLoS Biol.">
        <title>The genome sequence of Caenorhabditis briggsae: a platform for comparative genomics.</title>
        <authorList>
            <person name="Stein L.D."/>
            <person name="Bao Z."/>
            <person name="Blasiar D."/>
            <person name="Blumenthal T."/>
            <person name="Brent M.R."/>
            <person name="Chen N."/>
            <person name="Chinwalla A."/>
            <person name="Clarke L."/>
            <person name="Clee C."/>
            <person name="Coghlan A."/>
            <person name="Coulson A."/>
            <person name="D'Eustachio P."/>
            <person name="Fitch D.H.A."/>
            <person name="Fulton L.A."/>
            <person name="Fulton R.E."/>
            <person name="Griffiths-Jones S."/>
            <person name="Harris T.W."/>
            <person name="Hillier L.W."/>
            <person name="Kamath R."/>
            <person name="Kuwabara P.E."/>
            <person name="Mardis E.R."/>
            <person name="Marra M.A."/>
            <person name="Miner T.L."/>
            <person name="Minx P."/>
            <person name="Mullikin J.C."/>
            <person name="Plumb R.W."/>
            <person name="Rogers J."/>
            <person name="Schein J.E."/>
            <person name="Sohrmann M."/>
            <person name="Spieth J."/>
            <person name="Stajich J.E."/>
            <person name="Wei C."/>
            <person name="Willey D."/>
            <person name="Wilson R.K."/>
            <person name="Durbin R.M."/>
            <person name="Waterston R.H."/>
        </authorList>
    </citation>
    <scope>NUCLEOTIDE SEQUENCE [LARGE SCALE GENOMIC DNA]</scope>
    <source>
        <strain>AF16</strain>
    </source>
</reference>
<accession>Q61ZF6</accession>
<accession>A8WSQ6</accession>
<feature type="chain" id="PRO_0000127711" description="Guanine nucleotide-binding protein subunit beta-1">
    <location>
        <begin position="1"/>
        <end position="340"/>
    </location>
</feature>
<feature type="repeat" description="WD 1">
    <location>
        <begin position="53"/>
        <end position="83"/>
    </location>
</feature>
<feature type="repeat" description="WD 2">
    <location>
        <begin position="95"/>
        <end position="125"/>
    </location>
</feature>
<feature type="repeat" description="WD 3">
    <location>
        <begin position="141"/>
        <end position="170"/>
    </location>
</feature>
<feature type="repeat" description="WD 4">
    <location>
        <begin position="182"/>
        <end position="212"/>
    </location>
</feature>
<feature type="repeat" description="WD 5">
    <location>
        <begin position="224"/>
        <end position="254"/>
    </location>
</feature>
<feature type="repeat" description="WD 6">
    <location>
        <begin position="268"/>
        <end position="298"/>
    </location>
</feature>
<feature type="repeat" description="WD 7">
    <location>
        <begin position="310"/>
        <end position="340"/>
    </location>
</feature>
<proteinExistence type="inferred from homology"/>
<dbReference type="EMBL" id="AY634302">
    <property type="protein sequence ID" value="AAW02908.1"/>
    <property type="molecule type" value="Genomic_DNA"/>
</dbReference>
<dbReference type="EMBL" id="HE601438">
    <property type="protein sequence ID" value="CAP23515.1"/>
    <property type="molecule type" value="Genomic_DNA"/>
</dbReference>
<dbReference type="SMR" id="Q61ZF6"/>
<dbReference type="FunCoup" id="Q61ZF6">
    <property type="interactions" value="1198"/>
</dbReference>
<dbReference type="STRING" id="6238.Q61ZF6"/>
<dbReference type="EnsemblMetazoa" id="CBG03131.1">
    <property type="protein sequence ID" value="CBG03131.1"/>
    <property type="gene ID" value="WBGene00026054"/>
</dbReference>
<dbReference type="KEGG" id="cbr:CBG_03131"/>
<dbReference type="CTD" id="8572825"/>
<dbReference type="WormBase" id="CBG03131">
    <property type="protein sequence ID" value="CBP00625"/>
    <property type="gene ID" value="WBGene00026054"/>
    <property type="gene designation" value="Cbr-gpb-1"/>
</dbReference>
<dbReference type="eggNOG" id="KOG0286">
    <property type="taxonomic scope" value="Eukaryota"/>
</dbReference>
<dbReference type="HOGENOM" id="CLU_000288_57_34_1"/>
<dbReference type="InParanoid" id="Q61ZF6"/>
<dbReference type="OMA" id="PLDSQWV"/>
<dbReference type="OrthoDB" id="10255630at2759"/>
<dbReference type="Proteomes" id="UP000008549">
    <property type="component" value="Unassembled WGS sequence"/>
</dbReference>
<dbReference type="GO" id="GO:0005737">
    <property type="term" value="C:cytoplasm"/>
    <property type="evidence" value="ECO:0000318"/>
    <property type="project" value="GO_Central"/>
</dbReference>
<dbReference type="GO" id="GO:0005834">
    <property type="term" value="C:heterotrimeric G-protein complex"/>
    <property type="evidence" value="ECO:0000318"/>
    <property type="project" value="GO_Central"/>
</dbReference>
<dbReference type="GO" id="GO:0030159">
    <property type="term" value="F:signaling receptor complex adaptor activity"/>
    <property type="evidence" value="ECO:0000318"/>
    <property type="project" value="GO_Central"/>
</dbReference>
<dbReference type="GO" id="GO:0051301">
    <property type="term" value="P:cell division"/>
    <property type="evidence" value="ECO:0007669"/>
    <property type="project" value="UniProtKB-KW"/>
</dbReference>
<dbReference type="GO" id="GO:0009792">
    <property type="term" value="P:embryo development ending in birth or egg hatching"/>
    <property type="evidence" value="ECO:0007669"/>
    <property type="project" value="EnsemblMetazoa"/>
</dbReference>
<dbReference type="GO" id="GO:0000132">
    <property type="term" value="P:establishment of mitotic spindle orientation"/>
    <property type="evidence" value="ECO:0007669"/>
    <property type="project" value="EnsemblMetazoa"/>
</dbReference>
<dbReference type="GO" id="GO:0007186">
    <property type="term" value="P:G protein-coupled receptor signaling pathway"/>
    <property type="evidence" value="ECO:0000318"/>
    <property type="project" value="GO_Central"/>
</dbReference>
<dbReference type="GO" id="GO:0040013">
    <property type="term" value="P:negative regulation of locomotion"/>
    <property type="evidence" value="ECO:0007669"/>
    <property type="project" value="EnsemblMetazoa"/>
</dbReference>
<dbReference type="GO" id="GO:0046662">
    <property type="term" value="P:regulation of egg-laying behavior"/>
    <property type="evidence" value="ECO:0007669"/>
    <property type="project" value="EnsemblMetazoa"/>
</dbReference>
<dbReference type="CDD" id="cd00200">
    <property type="entry name" value="WD40"/>
    <property type="match status" value="1"/>
</dbReference>
<dbReference type="FunFam" id="2.130.10.10:FF:000007">
    <property type="entry name" value="Guanine nucleotide-binding protein G(I)/G(S)/G(T) subunit beta-1"/>
    <property type="match status" value="1"/>
</dbReference>
<dbReference type="Gene3D" id="2.130.10.10">
    <property type="entry name" value="YVTN repeat-like/Quinoprotein amine dehydrogenase"/>
    <property type="match status" value="1"/>
</dbReference>
<dbReference type="InterPro" id="IPR020472">
    <property type="entry name" value="G-protein_beta_WD-40_rep"/>
</dbReference>
<dbReference type="InterPro" id="IPR001632">
    <property type="entry name" value="Gprotein_B"/>
</dbReference>
<dbReference type="InterPro" id="IPR016346">
    <property type="entry name" value="Guanine_nucleotide-bd_bsu"/>
</dbReference>
<dbReference type="InterPro" id="IPR015943">
    <property type="entry name" value="WD40/YVTN_repeat-like_dom_sf"/>
</dbReference>
<dbReference type="InterPro" id="IPR019775">
    <property type="entry name" value="WD40_repeat_CS"/>
</dbReference>
<dbReference type="InterPro" id="IPR036322">
    <property type="entry name" value="WD40_repeat_dom_sf"/>
</dbReference>
<dbReference type="InterPro" id="IPR001680">
    <property type="entry name" value="WD40_rpt"/>
</dbReference>
<dbReference type="PANTHER" id="PTHR19850">
    <property type="entry name" value="GUANINE NUCLEOTIDE-BINDING PROTEIN BETA G PROTEIN BETA"/>
    <property type="match status" value="1"/>
</dbReference>
<dbReference type="Pfam" id="PF25391">
    <property type="entry name" value="WD40_Gbeta"/>
    <property type="match status" value="1"/>
</dbReference>
<dbReference type="PIRSF" id="PIRSF002394">
    <property type="entry name" value="GN-bd_beta"/>
    <property type="match status" value="1"/>
</dbReference>
<dbReference type="PRINTS" id="PR00319">
    <property type="entry name" value="GPROTEINB"/>
</dbReference>
<dbReference type="PRINTS" id="PR00320">
    <property type="entry name" value="GPROTEINBRPT"/>
</dbReference>
<dbReference type="SMART" id="SM00320">
    <property type="entry name" value="WD40"/>
    <property type="match status" value="7"/>
</dbReference>
<dbReference type="SUPFAM" id="SSF50978">
    <property type="entry name" value="WD40 repeat-like"/>
    <property type="match status" value="1"/>
</dbReference>
<dbReference type="PROSITE" id="PS00678">
    <property type="entry name" value="WD_REPEATS_1"/>
    <property type="match status" value="3"/>
</dbReference>
<dbReference type="PROSITE" id="PS50082">
    <property type="entry name" value="WD_REPEATS_2"/>
    <property type="match status" value="5"/>
</dbReference>
<dbReference type="PROSITE" id="PS50294">
    <property type="entry name" value="WD_REPEATS_REGION"/>
    <property type="match status" value="1"/>
</dbReference>
<name>GBB1_CAEBR</name>
<keyword id="KW-0131">Cell cycle</keyword>
<keyword id="KW-0132">Cell division</keyword>
<keyword id="KW-0498">Mitosis</keyword>
<keyword id="KW-1185">Reference proteome</keyword>
<keyword id="KW-0677">Repeat</keyword>
<keyword id="KW-0807">Transducer</keyword>
<keyword id="KW-0853">WD repeat</keyword>
<evidence type="ECO:0000250" key="1">
    <source>
        <dbReference type="UniProtKB" id="P17343"/>
    </source>
</evidence>
<evidence type="ECO:0000250" key="2">
    <source>
        <dbReference type="UniProtKB" id="P63212"/>
    </source>
</evidence>
<evidence type="ECO:0000305" key="3"/>